<name>LIPA_RICCN</name>
<keyword id="KW-0004">4Fe-4S</keyword>
<keyword id="KW-0963">Cytoplasm</keyword>
<keyword id="KW-0408">Iron</keyword>
<keyword id="KW-0411">Iron-sulfur</keyword>
<keyword id="KW-0479">Metal-binding</keyword>
<keyword id="KW-0949">S-adenosyl-L-methionine</keyword>
<keyword id="KW-0808">Transferase</keyword>
<dbReference type="EC" id="2.8.1.8" evidence="1"/>
<dbReference type="EMBL" id="AE006914">
    <property type="protein sequence ID" value="AAL03683.1"/>
    <property type="status" value="ALT_INIT"/>
    <property type="molecule type" value="Genomic_DNA"/>
</dbReference>
<dbReference type="PIR" id="A97843">
    <property type="entry name" value="A97843"/>
</dbReference>
<dbReference type="RefSeq" id="WP_004997515.1">
    <property type="nucleotide sequence ID" value="NC_003103.1"/>
</dbReference>
<dbReference type="SMR" id="Q92GH8"/>
<dbReference type="GeneID" id="95361569"/>
<dbReference type="KEGG" id="rco:RC1145"/>
<dbReference type="HOGENOM" id="CLU_033144_2_1_5"/>
<dbReference type="UniPathway" id="UPA00538">
    <property type="reaction ID" value="UER00593"/>
</dbReference>
<dbReference type="Proteomes" id="UP000000816">
    <property type="component" value="Chromosome"/>
</dbReference>
<dbReference type="GO" id="GO:0005737">
    <property type="term" value="C:cytoplasm"/>
    <property type="evidence" value="ECO:0007669"/>
    <property type="project" value="UniProtKB-SubCell"/>
</dbReference>
<dbReference type="GO" id="GO:0051539">
    <property type="term" value="F:4 iron, 4 sulfur cluster binding"/>
    <property type="evidence" value="ECO:0007669"/>
    <property type="project" value="UniProtKB-UniRule"/>
</dbReference>
<dbReference type="GO" id="GO:0016992">
    <property type="term" value="F:lipoate synthase activity"/>
    <property type="evidence" value="ECO:0007669"/>
    <property type="project" value="UniProtKB-UniRule"/>
</dbReference>
<dbReference type="GO" id="GO:0046872">
    <property type="term" value="F:metal ion binding"/>
    <property type="evidence" value="ECO:0007669"/>
    <property type="project" value="UniProtKB-KW"/>
</dbReference>
<dbReference type="CDD" id="cd01335">
    <property type="entry name" value="Radical_SAM"/>
    <property type="match status" value="1"/>
</dbReference>
<dbReference type="FunFam" id="3.20.20.70:FF:000040">
    <property type="entry name" value="Lipoyl synthase"/>
    <property type="match status" value="1"/>
</dbReference>
<dbReference type="Gene3D" id="3.20.20.70">
    <property type="entry name" value="Aldolase class I"/>
    <property type="match status" value="1"/>
</dbReference>
<dbReference type="HAMAP" id="MF_00206">
    <property type="entry name" value="Lipoyl_synth"/>
    <property type="match status" value="1"/>
</dbReference>
<dbReference type="InterPro" id="IPR013785">
    <property type="entry name" value="Aldolase_TIM"/>
</dbReference>
<dbReference type="InterPro" id="IPR006638">
    <property type="entry name" value="Elp3/MiaA/NifB-like_rSAM"/>
</dbReference>
<dbReference type="InterPro" id="IPR031691">
    <property type="entry name" value="LIAS_N"/>
</dbReference>
<dbReference type="InterPro" id="IPR003698">
    <property type="entry name" value="Lipoyl_synth"/>
</dbReference>
<dbReference type="InterPro" id="IPR007197">
    <property type="entry name" value="rSAM"/>
</dbReference>
<dbReference type="NCBIfam" id="TIGR00510">
    <property type="entry name" value="lipA"/>
    <property type="match status" value="1"/>
</dbReference>
<dbReference type="NCBIfam" id="NF004019">
    <property type="entry name" value="PRK05481.1"/>
    <property type="match status" value="1"/>
</dbReference>
<dbReference type="NCBIfam" id="NF009544">
    <property type="entry name" value="PRK12928.1"/>
    <property type="match status" value="1"/>
</dbReference>
<dbReference type="PANTHER" id="PTHR10949">
    <property type="entry name" value="LIPOYL SYNTHASE"/>
    <property type="match status" value="1"/>
</dbReference>
<dbReference type="PANTHER" id="PTHR10949:SF0">
    <property type="entry name" value="LIPOYL SYNTHASE, MITOCHONDRIAL"/>
    <property type="match status" value="1"/>
</dbReference>
<dbReference type="Pfam" id="PF16881">
    <property type="entry name" value="LIAS_N"/>
    <property type="match status" value="1"/>
</dbReference>
<dbReference type="Pfam" id="PF04055">
    <property type="entry name" value="Radical_SAM"/>
    <property type="match status" value="1"/>
</dbReference>
<dbReference type="PIRSF" id="PIRSF005963">
    <property type="entry name" value="Lipoyl_synth"/>
    <property type="match status" value="1"/>
</dbReference>
<dbReference type="SFLD" id="SFLDF00271">
    <property type="entry name" value="lipoyl_synthase"/>
    <property type="match status" value="1"/>
</dbReference>
<dbReference type="SFLD" id="SFLDS00029">
    <property type="entry name" value="Radical_SAM"/>
    <property type="match status" value="1"/>
</dbReference>
<dbReference type="SMART" id="SM00729">
    <property type="entry name" value="Elp3"/>
    <property type="match status" value="1"/>
</dbReference>
<dbReference type="SUPFAM" id="SSF102114">
    <property type="entry name" value="Radical SAM enzymes"/>
    <property type="match status" value="1"/>
</dbReference>
<dbReference type="PROSITE" id="PS51918">
    <property type="entry name" value="RADICAL_SAM"/>
    <property type="match status" value="1"/>
</dbReference>
<protein>
    <recommendedName>
        <fullName evidence="1">Lipoyl synthase</fullName>
        <ecNumber evidence="1">2.8.1.8</ecNumber>
    </recommendedName>
    <alternativeName>
        <fullName evidence="1">Lip-syn</fullName>
        <shortName evidence="1">LS</shortName>
    </alternativeName>
    <alternativeName>
        <fullName evidence="1">Lipoate synthase</fullName>
    </alternativeName>
    <alternativeName>
        <fullName evidence="1">Lipoic acid synthase</fullName>
    </alternativeName>
    <alternativeName>
        <fullName evidence="1">Sulfur insertion protein LipA</fullName>
    </alternativeName>
</protein>
<organism>
    <name type="scientific">Rickettsia conorii (strain ATCC VR-613 / Malish 7)</name>
    <dbReference type="NCBI Taxonomy" id="272944"/>
    <lineage>
        <taxon>Bacteria</taxon>
        <taxon>Pseudomonadati</taxon>
        <taxon>Pseudomonadota</taxon>
        <taxon>Alphaproteobacteria</taxon>
        <taxon>Rickettsiales</taxon>
        <taxon>Rickettsiaceae</taxon>
        <taxon>Rickettsieae</taxon>
        <taxon>Rickettsia</taxon>
        <taxon>spotted fever group</taxon>
    </lineage>
</organism>
<gene>
    <name evidence="1" type="primary">lipA</name>
    <name type="ordered locus">RC1145</name>
</gene>
<proteinExistence type="inferred from homology"/>
<reference key="1">
    <citation type="journal article" date="2001" name="Science">
        <title>Mechanisms of evolution in Rickettsia conorii and R. prowazekii.</title>
        <authorList>
            <person name="Ogata H."/>
            <person name="Audic S."/>
            <person name="Renesto-Audiffren P."/>
            <person name="Fournier P.-E."/>
            <person name="Barbe V."/>
            <person name="Samson D."/>
            <person name="Roux V."/>
            <person name="Cossart P."/>
            <person name="Weissenbach J."/>
            <person name="Claverie J.-M."/>
            <person name="Raoult D."/>
        </authorList>
    </citation>
    <scope>NUCLEOTIDE SEQUENCE [LARGE SCALE GENOMIC DNA]</scope>
    <source>
        <strain>ATCC VR-613 / Malish 7</strain>
    </source>
</reference>
<accession>Q92GH8</accession>
<comment type="function">
    <text evidence="1">Catalyzes the radical-mediated insertion of two sulfur atoms into the C-6 and C-8 positions of the octanoyl moiety bound to the lipoyl domains of lipoate-dependent enzymes, thereby converting the octanoylated domains into lipoylated derivatives.</text>
</comment>
<comment type="catalytic activity">
    <reaction evidence="1">
        <text>[[Fe-S] cluster scaffold protein carrying a second [4Fe-4S](2+) cluster] + N(6)-octanoyl-L-lysyl-[protein] + 2 oxidized [2Fe-2S]-[ferredoxin] + 2 S-adenosyl-L-methionine + 4 H(+) = [[Fe-S] cluster scaffold protein] + N(6)-[(R)-dihydrolipoyl]-L-lysyl-[protein] + 4 Fe(3+) + 2 hydrogen sulfide + 2 5'-deoxyadenosine + 2 L-methionine + 2 reduced [2Fe-2S]-[ferredoxin]</text>
        <dbReference type="Rhea" id="RHEA:16585"/>
        <dbReference type="Rhea" id="RHEA-COMP:9928"/>
        <dbReference type="Rhea" id="RHEA-COMP:10000"/>
        <dbReference type="Rhea" id="RHEA-COMP:10001"/>
        <dbReference type="Rhea" id="RHEA-COMP:10475"/>
        <dbReference type="Rhea" id="RHEA-COMP:14568"/>
        <dbReference type="Rhea" id="RHEA-COMP:14569"/>
        <dbReference type="ChEBI" id="CHEBI:15378"/>
        <dbReference type="ChEBI" id="CHEBI:17319"/>
        <dbReference type="ChEBI" id="CHEBI:29034"/>
        <dbReference type="ChEBI" id="CHEBI:29919"/>
        <dbReference type="ChEBI" id="CHEBI:33722"/>
        <dbReference type="ChEBI" id="CHEBI:33737"/>
        <dbReference type="ChEBI" id="CHEBI:33738"/>
        <dbReference type="ChEBI" id="CHEBI:57844"/>
        <dbReference type="ChEBI" id="CHEBI:59789"/>
        <dbReference type="ChEBI" id="CHEBI:78809"/>
        <dbReference type="ChEBI" id="CHEBI:83100"/>
        <dbReference type="EC" id="2.8.1.8"/>
    </reaction>
</comment>
<comment type="cofactor">
    <cofactor evidence="1">
        <name>[4Fe-4S] cluster</name>
        <dbReference type="ChEBI" id="CHEBI:49883"/>
    </cofactor>
    <text evidence="1">Binds 2 [4Fe-4S] clusters per subunit. One cluster is coordinated with 3 cysteines and an exchangeable S-adenosyl-L-methionine.</text>
</comment>
<comment type="pathway">
    <text evidence="1">Protein modification; protein lipoylation via endogenous pathway; protein N(6)-(lipoyl)lysine from octanoyl-[acyl-carrier-protein]: step 2/2.</text>
</comment>
<comment type="subcellular location">
    <subcellularLocation>
        <location evidence="1">Cytoplasm</location>
    </subcellularLocation>
</comment>
<comment type="similarity">
    <text evidence="1">Belongs to the radical SAM superfamily. Lipoyl synthase family.</text>
</comment>
<comment type="sequence caution" evidence="3">
    <conflict type="erroneous initiation">
        <sequence resource="EMBL-CDS" id="AAL03683"/>
    </conflict>
</comment>
<feature type="chain" id="PRO_0000102351" description="Lipoyl synthase">
    <location>
        <begin position="1"/>
        <end position="296"/>
    </location>
</feature>
<feature type="domain" description="Radical SAM core" evidence="2">
    <location>
        <begin position="49"/>
        <end position="265"/>
    </location>
</feature>
<feature type="binding site" evidence="1">
    <location>
        <position position="37"/>
    </location>
    <ligand>
        <name>[4Fe-4S] cluster</name>
        <dbReference type="ChEBI" id="CHEBI:49883"/>
        <label>1</label>
    </ligand>
</feature>
<feature type="binding site" evidence="1">
    <location>
        <position position="42"/>
    </location>
    <ligand>
        <name>[4Fe-4S] cluster</name>
        <dbReference type="ChEBI" id="CHEBI:49883"/>
        <label>1</label>
    </ligand>
</feature>
<feature type="binding site" evidence="1">
    <location>
        <position position="48"/>
    </location>
    <ligand>
        <name>[4Fe-4S] cluster</name>
        <dbReference type="ChEBI" id="CHEBI:49883"/>
        <label>1</label>
    </ligand>
</feature>
<feature type="binding site" evidence="1">
    <location>
        <position position="63"/>
    </location>
    <ligand>
        <name>[4Fe-4S] cluster</name>
        <dbReference type="ChEBI" id="CHEBI:49883"/>
        <label>2</label>
        <note>4Fe-4S-S-AdoMet</note>
    </ligand>
</feature>
<feature type="binding site" evidence="1">
    <location>
        <position position="67"/>
    </location>
    <ligand>
        <name>[4Fe-4S] cluster</name>
        <dbReference type="ChEBI" id="CHEBI:49883"/>
        <label>2</label>
        <note>4Fe-4S-S-AdoMet</note>
    </ligand>
</feature>
<feature type="binding site" evidence="1">
    <location>
        <position position="70"/>
    </location>
    <ligand>
        <name>[4Fe-4S] cluster</name>
        <dbReference type="ChEBI" id="CHEBI:49883"/>
        <label>2</label>
        <note>4Fe-4S-S-AdoMet</note>
    </ligand>
</feature>
<feature type="binding site" evidence="1">
    <location>
        <position position="276"/>
    </location>
    <ligand>
        <name>[4Fe-4S] cluster</name>
        <dbReference type="ChEBI" id="CHEBI:49883"/>
        <label>1</label>
    </ligand>
</feature>
<sequence>MANLNKRPDWIKVKAPNSTEYYNTKDLIKNLRLNTVCEEAACPNIGECWSKKHTTVMILGSVCTRACRFCNVKTGRPDLLDPYEPQRLAEAVQKLNLKHVVITSVDRDDLEDGGASHFAECISEIRKSSPNTTIEILTPDFLRKEGAAEIIANAKPDVFNHNVETVPSLYKTIRPGARYYNSLSLLHNIKKLSPEIFTKSGMMVGLGEEINEVVQVIDDLREAKVDFLTIGQYLQPTKNHAEVAKYVTPEEFKYLERVAKTKGFLMVSASPLTRSSYHADEDFQKLKENYQQKLVS</sequence>
<evidence type="ECO:0000255" key="1">
    <source>
        <dbReference type="HAMAP-Rule" id="MF_00206"/>
    </source>
</evidence>
<evidence type="ECO:0000255" key="2">
    <source>
        <dbReference type="PROSITE-ProRule" id="PRU01266"/>
    </source>
</evidence>
<evidence type="ECO:0000305" key="3"/>